<keyword id="KW-0027">Amidation</keyword>
<keyword id="KW-0903">Direct protein sequencing</keyword>
<keyword id="KW-0527">Neuropeptide</keyword>
<keyword id="KW-0873">Pyrrolidone carboxylic acid</keyword>
<keyword id="KW-0964">Secreted</keyword>
<organism>
    <name type="scientific">Manduca sexta</name>
    <name type="common">Tobacco hawkmoth</name>
    <name type="synonym">Tobacco hornworm</name>
    <dbReference type="NCBI Taxonomy" id="7130"/>
    <lineage>
        <taxon>Eukaryota</taxon>
        <taxon>Metazoa</taxon>
        <taxon>Ecdysozoa</taxon>
        <taxon>Arthropoda</taxon>
        <taxon>Hexapoda</taxon>
        <taxon>Insecta</taxon>
        <taxon>Pterygota</taxon>
        <taxon>Neoptera</taxon>
        <taxon>Endopterygota</taxon>
        <taxon>Lepidoptera</taxon>
        <taxon>Glossata</taxon>
        <taxon>Ditrysia</taxon>
        <taxon>Bombycoidea</taxon>
        <taxon>Sphingidae</taxon>
        <taxon>Sphinginae</taxon>
        <taxon>Sphingini</taxon>
        <taxon>Manduca</taxon>
    </lineage>
</organism>
<accession>P18523</accession>
<evidence type="ECO:0000269" key="1">
    <source>
    </source>
</evidence>
<evidence type="ECO:0000305" key="2"/>
<protein>
    <recommendedName>
        <fullName>FMRFamide-like neuropeptide</fullName>
    </recommendedName>
</protein>
<comment type="function">
    <text>Increases the force of neurally evoked contractions in the major power-producing flight muscles, the dorsal longitudinal muscles and so is likely to play a role in sustaining or promoting flight behavior patterns.</text>
</comment>
<comment type="subcellular location">
    <subcellularLocation>
        <location>Secreted</location>
    </subcellularLocation>
</comment>
<comment type="similarity">
    <text evidence="2">Belongs to the FARP (FMRFamide related peptide) family.</text>
</comment>
<sequence length="10" mass="1247">QDVVHSFLRF</sequence>
<dbReference type="PIR" id="A43977">
    <property type="entry name" value="A43977"/>
</dbReference>
<dbReference type="GO" id="GO:0005576">
    <property type="term" value="C:extracellular region"/>
    <property type="evidence" value="ECO:0007669"/>
    <property type="project" value="UniProtKB-SubCell"/>
</dbReference>
<dbReference type="GO" id="GO:0007218">
    <property type="term" value="P:neuropeptide signaling pathway"/>
    <property type="evidence" value="ECO:0007669"/>
    <property type="project" value="UniProtKB-KW"/>
</dbReference>
<reference key="1">
    <citation type="journal article" date="1990" name="Peptides">
        <title>A new peptide in the FMRFamide family isolated from the CNS of the hawkmoth, Manduca sexta.</title>
        <authorList>
            <person name="Kingan T.G."/>
            <person name="Teplow D.B."/>
            <person name="Phillips J.M."/>
            <person name="Riehm J.P."/>
            <person name="Rao K.R."/>
            <person name="Hildebrand J.G."/>
            <person name="Homberg U."/>
            <person name="Kammer A.E."/>
            <person name="Jardine I."/>
            <person name="Griffin P.R."/>
            <person name="Hunt D.F."/>
        </authorList>
    </citation>
    <scope>PROTEIN SEQUENCE</scope>
    <scope>PYROGLUTAMATE FORMATION AT GLN-1</scope>
    <scope>AMIDATION AT PHE-10</scope>
</reference>
<feature type="peptide" id="PRO_0000043692" description="FMRFamide-like neuropeptide">
    <location>
        <begin position="1"/>
        <end position="10"/>
    </location>
</feature>
<feature type="modified residue" description="Pyrrolidone carboxylic acid" evidence="1">
    <location>
        <position position="1"/>
    </location>
</feature>
<feature type="modified residue" description="Phenylalanine amide" evidence="1">
    <location>
        <position position="10"/>
    </location>
</feature>
<name>FARP_MANSE</name>
<proteinExistence type="evidence at protein level"/>